<name>DRE2_CRYPI</name>
<reference key="1">
    <citation type="journal article" date="2003" name="Genome Res.">
        <title>Integrated mapping, chromosomal sequencing and sequence analysis of Cryptosporidium parvum.</title>
        <authorList>
            <person name="Bankier A.T."/>
            <person name="Spriggs H.F."/>
            <person name="Fartmann B."/>
            <person name="Konfortov B.A."/>
            <person name="Madera M."/>
            <person name="Vogel C."/>
            <person name="Teichmann S.A."/>
            <person name="Ivens A."/>
            <person name="Dear P.H."/>
        </authorList>
    </citation>
    <scope>NUCLEOTIDE SEQUENCE [GENOMIC DNA]</scope>
    <source>
        <strain>Iowa II</strain>
    </source>
</reference>
<reference key="2">
    <citation type="journal article" date="2004" name="Science">
        <title>Complete genome sequence of the apicomplexan, Cryptosporidium parvum.</title>
        <authorList>
            <person name="Abrahamsen M.S."/>
            <person name="Templeton T.J."/>
            <person name="Enomoto S."/>
            <person name="Abrahante J.E."/>
            <person name="Zhu G."/>
            <person name="Lancto C.A."/>
            <person name="Deng M."/>
            <person name="Liu C."/>
            <person name="Widmer G."/>
            <person name="Tzipori S."/>
            <person name="Buck G.A."/>
            <person name="Xu P."/>
            <person name="Bankier A.T."/>
            <person name="Dear P.H."/>
            <person name="Konfortov B.A."/>
            <person name="Spriggs H.F."/>
            <person name="Iyer L."/>
            <person name="Anantharaman V."/>
            <person name="Aravind L."/>
            <person name="Kapur V."/>
        </authorList>
    </citation>
    <scope>NUCLEOTIDE SEQUENCE [LARGE SCALE GENOMIC DNA]</scope>
    <source>
        <strain>Iowa II</strain>
    </source>
</reference>
<evidence type="ECO:0000255" key="1">
    <source>
        <dbReference type="HAMAP-Rule" id="MF_03115"/>
    </source>
</evidence>
<organism>
    <name type="scientific">Cryptosporidium parvum (strain Iowa II)</name>
    <dbReference type="NCBI Taxonomy" id="353152"/>
    <lineage>
        <taxon>Eukaryota</taxon>
        <taxon>Sar</taxon>
        <taxon>Alveolata</taxon>
        <taxon>Apicomplexa</taxon>
        <taxon>Conoidasida</taxon>
        <taxon>Coccidia</taxon>
        <taxon>Eucoccidiorida</taxon>
        <taxon>Eimeriorina</taxon>
        <taxon>Cryptosporidiidae</taxon>
        <taxon>Cryptosporidium</taxon>
    </lineage>
</organism>
<proteinExistence type="inferred from homology"/>
<dbReference type="EMBL" id="BX538352">
    <property type="protein sequence ID" value="CAD98454.1"/>
    <property type="molecule type" value="Genomic_DNA"/>
</dbReference>
<dbReference type="EMBL" id="AAEE01000002">
    <property type="protein sequence ID" value="EAK90016.1"/>
    <property type="molecule type" value="Genomic_DNA"/>
</dbReference>
<dbReference type="RefSeq" id="XP_627747.1">
    <property type="nucleotide sequence ID" value="XM_627747.1"/>
</dbReference>
<dbReference type="SMR" id="Q5CWQ7"/>
<dbReference type="STRING" id="353152.Q5CWQ7"/>
<dbReference type="EnsemblProtists" id="EAK90016">
    <property type="protein sequence ID" value="EAK90016"/>
    <property type="gene ID" value="cgd6_4130"/>
</dbReference>
<dbReference type="GeneID" id="3375761"/>
<dbReference type="KEGG" id="cpv:cgd6_4130"/>
<dbReference type="VEuPathDB" id="CryptoDB:cgd6_4130"/>
<dbReference type="InParanoid" id="Q5CWQ7"/>
<dbReference type="OrthoDB" id="311633at2759"/>
<dbReference type="Proteomes" id="UP000006726">
    <property type="component" value="Chromosome 6"/>
</dbReference>
<dbReference type="Proteomes" id="UP000242991">
    <property type="component" value="Chromosome 6"/>
</dbReference>
<dbReference type="GO" id="GO:0005758">
    <property type="term" value="C:mitochondrial intermembrane space"/>
    <property type="evidence" value="ECO:0007669"/>
    <property type="project" value="UniProtKB-SubCell"/>
</dbReference>
<dbReference type="GO" id="GO:0051537">
    <property type="term" value="F:2 iron, 2 sulfur cluster binding"/>
    <property type="evidence" value="ECO:0007669"/>
    <property type="project" value="UniProtKB-UniRule"/>
</dbReference>
<dbReference type="GO" id="GO:0051539">
    <property type="term" value="F:4 iron, 4 sulfur cluster binding"/>
    <property type="evidence" value="ECO:0007669"/>
    <property type="project" value="UniProtKB-KW"/>
</dbReference>
<dbReference type="GO" id="GO:0009055">
    <property type="term" value="F:electron transfer activity"/>
    <property type="evidence" value="ECO:0007669"/>
    <property type="project" value="UniProtKB-UniRule"/>
</dbReference>
<dbReference type="GO" id="GO:0046872">
    <property type="term" value="F:metal ion binding"/>
    <property type="evidence" value="ECO:0007669"/>
    <property type="project" value="UniProtKB-KW"/>
</dbReference>
<dbReference type="GO" id="GO:0016226">
    <property type="term" value="P:iron-sulfur cluster assembly"/>
    <property type="evidence" value="ECO:0007669"/>
    <property type="project" value="UniProtKB-UniRule"/>
</dbReference>
<dbReference type="HAMAP" id="MF_03115">
    <property type="entry name" value="Anamorsin"/>
    <property type="match status" value="1"/>
</dbReference>
<dbReference type="InterPro" id="IPR007785">
    <property type="entry name" value="Anamorsin"/>
</dbReference>
<dbReference type="InterPro" id="IPR046408">
    <property type="entry name" value="CIAPIN1"/>
</dbReference>
<dbReference type="PANTHER" id="PTHR13273">
    <property type="entry name" value="ANAMORSIN"/>
    <property type="match status" value="1"/>
</dbReference>
<dbReference type="PANTHER" id="PTHR13273:SF14">
    <property type="entry name" value="ANAMORSIN"/>
    <property type="match status" value="1"/>
</dbReference>
<dbReference type="Pfam" id="PF05093">
    <property type="entry name" value="CIAPIN1"/>
    <property type="match status" value="1"/>
</dbReference>
<feature type="chain" id="PRO_0000392352" description="Anamorsin homolog">
    <location>
        <begin position="1"/>
        <end position="298"/>
    </location>
</feature>
<feature type="region of interest" description="N-terminal SAM-like domain" evidence="1">
    <location>
        <begin position="1"/>
        <end position="143"/>
    </location>
</feature>
<feature type="region of interest" description="Linker" evidence="1">
    <location>
        <begin position="143"/>
        <end position="162"/>
    </location>
</feature>
<feature type="region of interest" description="Fe-S binding site A" evidence="1">
    <location>
        <begin position="175"/>
        <end position="187"/>
    </location>
</feature>
<feature type="region of interest" description="Fe-S binding site B" evidence="1">
    <location>
        <begin position="218"/>
        <end position="232"/>
    </location>
</feature>
<feature type="short sequence motif" description="Cx2C motif 1" evidence="1">
    <location>
        <begin position="218"/>
        <end position="221"/>
    </location>
</feature>
<feature type="short sequence motif" description="Cx2C motif 2" evidence="1">
    <location>
        <begin position="229"/>
        <end position="232"/>
    </location>
</feature>
<feature type="binding site" evidence="1">
    <location>
        <position position="175"/>
    </location>
    <ligand>
        <name>[2Fe-2S] cluster</name>
        <dbReference type="ChEBI" id="CHEBI:190135"/>
    </ligand>
</feature>
<feature type="binding site" evidence="1">
    <location>
        <position position="182"/>
    </location>
    <ligand>
        <name>[2Fe-2S] cluster</name>
        <dbReference type="ChEBI" id="CHEBI:190135"/>
    </ligand>
</feature>
<feature type="binding site" evidence="1">
    <location>
        <position position="185"/>
    </location>
    <ligand>
        <name>[2Fe-2S] cluster</name>
        <dbReference type="ChEBI" id="CHEBI:190135"/>
    </ligand>
</feature>
<feature type="binding site" evidence="1">
    <location>
        <position position="187"/>
    </location>
    <ligand>
        <name>[2Fe-2S] cluster</name>
        <dbReference type="ChEBI" id="CHEBI:190135"/>
    </ligand>
</feature>
<feature type="binding site" evidence="1">
    <location>
        <position position="218"/>
    </location>
    <ligand>
        <name>[4Fe-4S] cluster</name>
        <dbReference type="ChEBI" id="CHEBI:49883"/>
    </ligand>
</feature>
<feature type="binding site" evidence="1">
    <location>
        <position position="221"/>
    </location>
    <ligand>
        <name>[4Fe-4S] cluster</name>
        <dbReference type="ChEBI" id="CHEBI:49883"/>
    </ligand>
</feature>
<feature type="binding site" evidence="1">
    <location>
        <position position="229"/>
    </location>
    <ligand>
        <name>[4Fe-4S] cluster</name>
        <dbReference type="ChEBI" id="CHEBI:49883"/>
    </ligand>
</feature>
<feature type="binding site" evidence="1">
    <location>
        <position position="232"/>
    </location>
    <ligand>
        <name>[4Fe-4S] cluster</name>
        <dbReference type="ChEBI" id="CHEBI:49883"/>
    </ligand>
</feature>
<sequence length="298" mass="32851">MTQLIITHQSDSKLEESEVFLSELNRIKKEEDKFGKFSSLSDLRAIVKKGEFRIVSIYLSSGSILGEIFTFEFLKEFYGVLDFGSVLKVNILALDSIDKVKAFERNLLFSGFIKVKKLKGDGLNSSDSDFEIVIKAEKPSWKPEEGKVLVDDIDLEGSVPDIKNYVPLGQGKESCKSKERACNNCNCGRADLEKEIGVEAARKVYQEKVETGTARSSCGNCYLGDAFRCSGCPYKGMPAFKPGEKVSLANAEGDANDHTVDMNLIHEEKVDLITTTFDDDGSGVNNVQSKGGVLKLNI</sequence>
<gene>
    <name type="ORF">cgd6_4130</name>
</gene>
<keyword id="KW-0001">2Fe-2S</keyword>
<keyword id="KW-0004">4Fe-4S</keyword>
<keyword id="KW-0963">Cytoplasm</keyword>
<keyword id="KW-0408">Iron</keyword>
<keyword id="KW-0411">Iron-sulfur</keyword>
<keyword id="KW-0479">Metal-binding</keyword>
<keyword id="KW-0496">Mitochondrion</keyword>
<keyword id="KW-1185">Reference proteome</keyword>
<accession>Q5CWQ7</accession>
<accession>Q7YYM7</accession>
<comment type="function">
    <text evidence="1">Component of the cytosolic iron-sulfur (Fe-S) protein assembly (CIA) machinery. Required for the maturation of extramitochondrial Fe-S proteins. Part of an electron transfer chain functioning in an early step of cytosolic Fe-S biogenesis, facilitating the de novo assembly of a [4Fe-4S] cluster on the cytosolic Fe-S scaffold complex. Electrons are transferred from NADPH via a FAD- and FMN-containing diflavin oxidoreductase. Together with the diflavin oxidoreductase, also required for the assembly of the diferric tyrosyl radical cofactor of ribonucleotide reductase (RNR), probably by providing electrons for reduction during radical cofactor maturation in the catalytic small subunit.</text>
</comment>
<comment type="cofactor">
    <cofactor evidence="1">
        <name>[2Fe-2S] cluster</name>
        <dbReference type="ChEBI" id="CHEBI:190135"/>
    </cofactor>
</comment>
<comment type="cofactor">
    <cofactor evidence="1">
        <name>[4Fe-4S] cluster</name>
        <dbReference type="ChEBI" id="CHEBI:49883"/>
    </cofactor>
</comment>
<comment type="subunit">
    <text evidence="1">Monomer.</text>
</comment>
<comment type="subcellular location">
    <subcellularLocation>
        <location evidence="1">Cytoplasm</location>
    </subcellularLocation>
    <subcellularLocation>
        <location evidence="1">Mitochondrion intermembrane space</location>
    </subcellularLocation>
</comment>
<comment type="domain">
    <text evidence="1">The C-terminal domain binds 2 Fe-S clusters but is otherwise mostly in an intrinsically disordered conformation.</text>
</comment>
<comment type="domain">
    <text evidence="1">The N-terminal domain has structural similarity with S-adenosyl-L-methionine-dependent methyltransferases, but does not bind S-adenosyl-L-methionine. It is required for correct assembly of the 2 Fe-S clusters.</text>
</comment>
<comment type="domain">
    <text evidence="1">The twin Cx2C motifs are involved in the recognition by the mitochondrial MIA40-ERV1 disulfide relay system. The formation of 2 disulfide bonds in the Cx2C motifs through dithiol/disulfide exchange reactions effectively traps the protein in the mitochondrial intermembrane space.</text>
</comment>
<comment type="similarity">
    <text evidence="1">Belongs to the anamorsin family.</text>
</comment>
<protein>
    <recommendedName>
        <fullName evidence="1">Anamorsin homolog</fullName>
    </recommendedName>
    <alternativeName>
        <fullName evidence="1">Fe-S cluster assembly protein DRE2 homolog</fullName>
    </alternativeName>
</protein>